<organism>
    <name type="scientific">Drosophila melanogaster</name>
    <name type="common">Fruit fly</name>
    <dbReference type="NCBI Taxonomy" id="7227"/>
    <lineage>
        <taxon>Eukaryota</taxon>
        <taxon>Metazoa</taxon>
        <taxon>Ecdysozoa</taxon>
        <taxon>Arthropoda</taxon>
        <taxon>Hexapoda</taxon>
        <taxon>Insecta</taxon>
        <taxon>Pterygota</taxon>
        <taxon>Neoptera</taxon>
        <taxon>Endopterygota</taxon>
        <taxon>Diptera</taxon>
        <taxon>Brachycera</taxon>
        <taxon>Muscomorpha</taxon>
        <taxon>Ephydroidea</taxon>
        <taxon>Drosophilidae</taxon>
        <taxon>Drosophila</taxon>
        <taxon>Sophophora</taxon>
    </lineage>
</organism>
<comment type="function">
    <text evidence="1">Catalyzes the oxidative decarboxylation of 6-phosphogluconate to ribulose 5-phosphate and CO(2), with concomitant reduction of NADP to NADPH.</text>
</comment>
<comment type="catalytic activity">
    <reaction>
        <text>6-phospho-D-gluconate + NADP(+) = D-ribulose 5-phosphate + CO2 + NADPH</text>
        <dbReference type="Rhea" id="RHEA:10116"/>
        <dbReference type="ChEBI" id="CHEBI:16526"/>
        <dbReference type="ChEBI" id="CHEBI:57783"/>
        <dbReference type="ChEBI" id="CHEBI:58121"/>
        <dbReference type="ChEBI" id="CHEBI:58349"/>
        <dbReference type="ChEBI" id="CHEBI:58759"/>
        <dbReference type="EC" id="1.1.1.44"/>
    </reaction>
</comment>
<comment type="pathway">
    <text>Carbohydrate degradation; pentose phosphate pathway; D-ribulose 5-phosphate from D-glucose 6-phosphate (oxidative stage): step 3/3.</text>
</comment>
<comment type="subunit">
    <text evidence="1">Homodimer.</text>
</comment>
<comment type="similarity">
    <text evidence="2">Belongs to the 6-phosphogluconate dehydrogenase family.</text>
</comment>
<evidence type="ECO:0000250" key="1"/>
<evidence type="ECO:0000305" key="2"/>
<dbReference type="EC" id="1.1.1.44"/>
<dbReference type="EMBL" id="M80598">
    <property type="protein sequence ID" value="AAA28786.1"/>
    <property type="molecule type" value="Genomic_DNA"/>
</dbReference>
<dbReference type="EMBL" id="AE014298">
    <property type="protein sequence ID" value="AAF45732.1"/>
    <property type="molecule type" value="Genomic_DNA"/>
</dbReference>
<dbReference type="EMBL" id="Z98269">
    <property type="protein sequence ID" value="CAB10974.1"/>
    <property type="molecule type" value="Genomic_DNA"/>
</dbReference>
<dbReference type="EMBL" id="AY089447">
    <property type="protein sequence ID" value="AAL90185.1"/>
    <property type="molecule type" value="mRNA"/>
</dbReference>
<dbReference type="PIR" id="JH0531">
    <property type="entry name" value="JH0531"/>
</dbReference>
<dbReference type="RefSeq" id="NP_001259175.1">
    <property type="nucleotide sequence ID" value="NM_001272246.1"/>
</dbReference>
<dbReference type="RefSeq" id="NP_476860.2">
    <property type="nucleotide sequence ID" value="NM_057512.3"/>
</dbReference>
<dbReference type="SMR" id="P41572"/>
<dbReference type="BioGRID" id="57726">
    <property type="interactions" value="36"/>
</dbReference>
<dbReference type="FunCoup" id="P41572">
    <property type="interactions" value="1170"/>
</dbReference>
<dbReference type="IntAct" id="P41572">
    <property type="interactions" value="156"/>
</dbReference>
<dbReference type="STRING" id="7227.FBpp0070368"/>
<dbReference type="PaxDb" id="7227-FBpp0070368"/>
<dbReference type="GeneID" id="31185"/>
<dbReference type="KEGG" id="dme:Dmel_CG3724"/>
<dbReference type="AGR" id="FB:FBgn0004654"/>
<dbReference type="CTD" id="5226"/>
<dbReference type="FlyBase" id="FBgn0004654">
    <property type="gene designation" value="Pgd"/>
</dbReference>
<dbReference type="VEuPathDB" id="VectorBase:FBgn0004654"/>
<dbReference type="eggNOG" id="KOG2653">
    <property type="taxonomic scope" value="Eukaryota"/>
</dbReference>
<dbReference type="HOGENOM" id="CLU_024540_4_2_1"/>
<dbReference type="InParanoid" id="P41572"/>
<dbReference type="OrthoDB" id="434986at2759"/>
<dbReference type="PhylomeDB" id="P41572"/>
<dbReference type="Reactome" id="R-DME-71336">
    <property type="pathway name" value="Pentose phosphate pathway"/>
</dbReference>
<dbReference type="UniPathway" id="UPA00115">
    <property type="reaction ID" value="UER00410"/>
</dbReference>
<dbReference type="BioGRID-ORCS" id="31185">
    <property type="hits" value="2 hits in 3 CRISPR screens"/>
</dbReference>
<dbReference type="GenomeRNAi" id="31185"/>
<dbReference type="PRO" id="PR:P41572"/>
<dbReference type="Proteomes" id="UP000000803">
    <property type="component" value="Chromosome X"/>
</dbReference>
<dbReference type="ExpressionAtlas" id="P41572">
    <property type="expression patterns" value="baseline and differential"/>
</dbReference>
<dbReference type="GO" id="GO:0005829">
    <property type="term" value="C:cytosol"/>
    <property type="evidence" value="ECO:0000318"/>
    <property type="project" value="GO_Central"/>
</dbReference>
<dbReference type="GO" id="GO:0050661">
    <property type="term" value="F:NADP binding"/>
    <property type="evidence" value="ECO:0000318"/>
    <property type="project" value="GO_Central"/>
</dbReference>
<dbReference type="GO" id="GO:0004616">
    <property type="term" value="F:phosphogluconate dehydrogenase (decarboxylating) activity"/>
    <property type="evidence" value="ECO:0000314"/>
    <property type="project" value="FlyBase"/>
</dbReference>
<dbReference type="GO" id="GO:0019521">
    <property type="term" value="P:D-gluconate metabolic process"/>
    <property type="evidence" value="ECO:0007669"/>
    <property type="project" value="UniProtKB-KW"/>
</dbReference>
<dbReference type="GO" id="GO:0042593">
    <property type="term" value="P:glucose homeostasis"/>
    <property type="evidence" value="ECO:0000315"/>
    <property type="project" value="FlyBase"/>
</dbReference>
<dbReference type="GO" id="GO:0009051">
    <property type="term" value="P:pentose-phosphate shunt, oxidative branch"/>
    <property type="evidence" value="ECO:0000315"/>
    <property type="project" value="FlyBase"/>
</dbReference>
<dbReference type="FunFam" id="1.10.1040.10:FF:000002">
    <property type="entry name" value="6-phosphogluconate dehydrogenase, decarboxylating"/>
    <property type="match status" value="1"/>
</dbReference>
<dbReference type="FunFam" id="1.20.5.320:FF:000002">
    <property type="entry name" value="6-phosphogluconate dehydrogenase, decarboxylating"/>
    <property type="match status" value="1"/>
</dbReference>
<dbReference type="FunFam" id="3.40.50.720:FF:000007">
    <property type="entry name" value="6-phosphogluconate dehydrogenase, decarboxylating"/>
    <property type="match status" value="1"/>
</dbReference>
<dbReference type="Gene3D" id="1.20.5.320">
    <property type="entry name" value="6-Phosphogluconate Dehydrogenase, domain 3"/>
    <property type="match status" value="1"/>
</dbReference>
<dbReference type="Gene3D" id="1.10.1040.10">
    <property type="entry name" value="N-(1-d-carboxylethyl)-l-norvaline Dehydrogenase, domain 2"/>
    <property type="match status" value="1"/>
</dbReference>
<dbReference type="Gene3D" id="3.40.50.720">
    <property type="entry name" value="NAD(P)-binding Rossmann-like Domain"/>
    <property type="match status" value="1"/>
</dbReference>
<dbReference type="InterPro" id="IPR008927">
    <property type="entry name" value="6-PGluconate_DH-like_C_sf"/>
</dbReference>
<dbReference type="InterPro" id="IPR013328">
    <property type="entry name" value="6PGD_dom2"/>
</dbReference>
<dbReference type="InterPro" id="IPR006114">
    <property type="entry name" value="6PGDH_C"/>
</dbReference>
<dbReference type="InterPro" id="IPR006113">
    <property type="entry name" value="6PGDH_Gnd/GntZ"/>
</dbReference>
<dbReference type="InterPro" id="IPR006115">
    <property type="entry name" value="6PGDH_NADP-bd"/>
</dbReference>
<dbReference type="InterPro" id="IPR006184">
    <property type="entry name" value="6PGdom_BS"/>
</dbReference>
<dbReference type="InterPro" id="IPR036291">
    <property type="entry name" value="NAD(P)-bd_dom_sf"/>
</dbReference>
<dbReference type="InterPro" id="IPR006183">
    <property type="entry name" value="Pgluconate_DH"/>
</dbReference>
<dbReference type="NCBIfam" id="TIGR00873">
    <property type="entry name" value="gnd"/>
    <property type="match status" value="1"/>
</dbReference>
<dbReference type="NCBIfam" id="NF006765">
    <property type="entry name" value="PRK09287.1"/>
    <property type="match status" value="1"/>
</dbReference>
<dbReference type="PANTHER" id="PTHR11811">
    <property type="entry name" value="6-PHOSPHOGLUCONATE DEHYDROGENASE"/>
    <property type="match status" value="1"/>
</dbReference>
<dbReference type="Pfam" id="PF00393">
    <property type="entry name" value="6PGD"/>
    <property type="match status" value="1"/>
</dbReference>
<dbReference type="Pfam" id="PF03446">
    <property type="entry name" value="NAD_binding_2"/>
    <property type="match status" value="1"/>
</dbReference>
<dbReference type="PIRSF" id="PIRSF000109">
    <property type="entry name" value="6PGD"/>
    <property type="match status" value="1"/>
</dbReference>
<dbReference type="PRINTS" id="PR00076">
    <property type="entry name" value="6PGDHDRGNASE"/>
</dbReference>
<dbReference type="SMART" id="SM01350">
    <property type="entry name" value="6PGD"/>
    <property type="match status" value="1"/>
</dbReference>
<dbReference type="SUPFAM" id="SSF48179">
    <property type="entry name" value="6-phosphogluconate dehydrogenase C-terminal domain-like"/>
    <property type="match status" value="1"/>
</dbReference>
<dbReference type="SUPFAM" id="SSF51735">
    <property type="entry name" value="NAD(P)-binding Rossmann-fold domains"/>
    <property type="match status" value="1"/>
</dbReference>
<dbReference type="PROSITE" id="PS00461">
    <property type="entry name" value="6PGD"/>
    <property type="match status" value="1"/>
</dbReference>
<sequence length="481" mass="52491">MSGQADIALIGLAVMGQNLILNMDEKGFVVCAYNRTVAKVKEFLANEAKDTKVIGADSLEDMVSKLKSPRKVMLLVKAGSAVDDFIQQLVPLLSAGDVIIDGGNSEYQDTSRRCDELAKLGLLFVGSGVSGGEEGARHGPSLMPGGHEAAWPLIQPIFQAICAKADGEPCCEWVGDGGAGHFVKMVHNGIEYGDMQLICEAYHIMKSLGLSADQMADEFGKWNSAELDSFLIEITRDILKYKDGKGYLLERIRDTAGQKGTGKWTAIAALQYGVPVTLIGEAVFSRCLSALKDERVQASSVLKGPSTKAQVANLTKFLDDIKHALYCAKIVSYAQGFMLMREAARENKWRLNYGGIALMWRGGCIIRSVFLGNIKDAYTSQPELSNLLLDDFFKKAIERGQDSWREVVANAFRWGIPVPALSTALSFYDGYRTAKLPANLLQAQRDYFGAHTYELLGQEGQFHHTNWTGTGGNVSASTYQA</sequence>
<gene>
    <name type="primary">Pgd</name>
    <name type="ORF">CG3724</name>
</gene>
<feature type="chain" id="PRO_0000090069" description="6-phosphogluconate dehydrogenase, decarboxylating">
    <location>
        <begin position="1"/>
        <end position="481"/>
    </location>
</feature>
<feature type="active site" description="Proton acceptor" evidence="1">
    <location>
        <position position="184"/>
    </location>
</feature>
<feature type="active site" description="Proton donor" evidence="1">
    <location>
        <position position="191"/>
    </location>
</feature>
<feature type="binding site" evidence="1">
    <location>
        <begin position="11"/>
        <end position="16"/>
    </location>
    <ligand>
        <name>NADP(+)</name>
        <dbReference type="ChEBI" id="CHEBI:58349"/>
    </ligand>
</feature>
<feature type="binding site" evidence="1">
    <location>
        <begin position="34"/>
        <end position="36"/>
    </location>
    <ligand>
        <name>NADP(+)</name>
        <dbReference type="ChEBI" id="CHEBI:58349"/>
    </ligand>
</feature>
<feature type="binding site" evidence="1">
    <location>
        <begin position="76"/>
        <end position="78"/>
    </location>
    <ligand>
        <name>NADP(+)</name>
        <dbReference type="ChEBI" id="CHEBI:58349"/>
    </ligand>
</feature>
<feature type="binding site" evidence="1">
    <location>
        <position position="104"/>
    </location>
    <ligand>
        <name>NADP(+)</name>
        <dbReference type="ChEBI" id="CHEBI:58349"/>
    </ligand>
</feature>
<feature type="binding site" description="in other chain" evidence="1">
    <location>
        <position position="104"/>
    </location>
    <ligand>
        <name>substrate</name>
        <note>ligand shared between dimeric partners</note>
    </ligand>
</feature>
<feature type="binding site" description="in other chain" evidence="1">
    <location>
        <begin position="130"/>
        <end position="132"/>
    </location>
    <ligand>
        <name>substrate</name>
        <note>ligand shared between dimeric partners</note>
    </ligand>
</feature>
<feature type="binding site" description="in other chain" evidence="1">
    <location>
        <begin position="187"/>
        <end position="188"/>
    </location>
    <ligand>
        <name>substrate</name>
        <note>ligand shared between dimeric partners</note>
    </ligand>
</feature>
<feature type="binding site" description="in other chain" evidence="1">
    <location>
        <position position="192"/>
    </location>
    <ligand>
        <name>substrate</name>
        <note>ligand shared between dimeric partners</note>
    </ligand>
</feature>
<feature type="binding site" description="in other chain" evidence="1">
    <location>
        <position position="259"/>
    </location>
    <ligand>
        <name>substrate</name>
        <note>ligand shared between dimeric partners</note>
    </ligand>
</feature>
<feature type="binding site" description="in other chain" evidence="1">
    <location>
        <position position="286"/>
    </location>
    <ligand>
        <name>substrate</name>
        <note>ligand shared between dimeric partners</note>
    </ligand>
</feature>
<feature type="binding site" evidence="1">
    <location>
        <position position="445"/>
    </location>
    <ligand>
        <name>substrate</name>
        <note>ligand shared between dimeric partners</note>
    </ligand>
</feature>
<feature type="binding site" evidence="1">
    <location>
        <position position="451"/>
    </location>
    <ligand>
        <name>substrate</name>
        <note>ligand shared between dimeric partners</note>
    </ligand>
</feature>
<feature type="sequence conflict" description="In Ref. 2; AAF45732." evidence="2" ref="2">
    <original>K</original>
    <variation>Q</variation>
    <location>
        <position position="206"/>
    </location>
</feature>
<protein>
    <recommendedName>
        <fullName>6-phosphogluconate dehydrogenase, decarboxylating</fullName>
        <ecNumber>1.1.1.44</ecNumber>
    </recommendedName>
</protein>
<name>6PGD_DROME</name>
<accession>P41572</accession>
<accession>Q9W519</accession>
<reference key="1">
    <citation type="journal article" date="1991" name="Gene">
        <title>Structure and expression of the Drosophila melanogaster gene encoding 6-phosphogluconate dehydrogenase.</title>
        <authorList>
            <person name="Scott M.J."/>
            <person name="Lucchesi J.C."/>
        </authorList>
    </citation>
    <scope>NUCLEOTIDE SEQUENCE [GENOMIC DNA]</scope>
    <source>
        <strain>Canton-S</strain>
    </source>
</reference>
<reference key="2">
    <citation type="journal article" date="2000" name="Science">
        <title>The genome sequence of Drosophila melanogaster.</title>
        <authorList>
            <person name="Adams M.D."/>
            <person name="Celniker S.E."/>
            <person name="Holt R.A."/>
            <person name="Evans C.A."/>
            <person name="Gocayne J.D."/>
            <person name="Amanatides P.G."/>
            <person name="Scherer S.E."/>
            <person name="Li P.W."/>
            <person name="Hoskins R.A."/>
            <person name="Galle R.F."/>
            <person name="George R.A."/>
            <person name="Lewis S.E."/>
            <person name="Richards S."/>
            <person name="Ashburner M."/>
            <person name="Henderson S.N."/>
            <person name="Sutton G.G."/>
            <person name="Wortman J.R."/>
            <person name="Yandell M.D."/>
            <person name="Zhang Q."/>
            <person name="Chen L.X."/>
            <person name="Brandon R.C."/>
            <person name="Rogers Y.-H.C."/>
            <person name="Blazej R.G."/>
            <person name="Champe M."/>
            <person name="Pfeiffer B.D."/>
            <person name="Wan K.H."/>
            <person name="Doyle C."/>
            <person name="Baxter E.G."/>
            <person name="Helt G."/>
            <person name="Nelson C.R."/>
            <person name="Miklos G.L.G."/>
            <person name="Abril J.F."/>
            <person name="Agbayani A."/>
            <person name="An H.-J."/>
            <person name="Andrews-Pfannkoch C."/>
            <person name="Baldwin D."/>
            <person name="Ballew R.M."/>
            <person name="Basu A."/>
            <person name="Baxendale J."/>
            <person name="Bayraktaroglu L."/>
            <person name="Beasley E.M."/>
            <person name="Beeson K.Y."/>
            <person name="Benos P.V."/>
            <person name="Berman B.P."/>
            <person name="Bhandari D."/>
            <person name="Bolshakov S."/>
            <person name="Borkova D."/>
            <person name="Botchan M.R."/>
            <person name="Bouck J."/>
            <person name="Brokstein P."/>
            <person name="Brottier P."/>
            <person name="Burtis K.C."/>
            <person name="Busam D.A."/>
            <person name="Butler H."/>
            <person name="Cadieu E."/>
            <person name="Center A."/>
            <person name="Chandra I."/>
            <person name="Cherry J.M."/>
            <person name="Cawley S."/>
            <person name="Dahlke C."/>
            <person name="Davenport L.B."/>
            <person name="Davies P."/>
            <person name="de Pablos B."/>
            <person name="Delcher A."/>
            <person name="Deng Z."/>
            <person name="Mays A.D."/>
            <person name="Dew I."/>
            <person name="Dietz S.M."/>
            <person name="Dodson K."/>
            <person name="Doup L.E."/>
            <person name="Downes M."/>
            <person name="Dugan-Rocha S."/>
            <person name="Dunkov B.C."/>
            <person name="Dunn P."/>
            <person name="Durbin K.J."/>
            <person name="Evangelista C.C."/>
            <person name="Ferraz C."/>
            <person name="Ferriera S."/>
            <person name="Fleischmann W."/>
            <person name="Fosler C."/>
            <person name="Gabrielian A.E."/>
            <person name="Garg N.S."/>
            <person name="Gelbart W.M."/>
            <person name="Glasser K."/>
            <person name="Glodek A."/>
            <person name="Gong F."/>
            <person name="Gorrell J.H."/>
            <person name="Gu Z."/>
            <person name="Guan P."/>
            <person name="Harris M."/>
            <person name="Harris N.L."/>
            <person name="Harvey D.A."/>
            <person name="Heiman T.J."/>
            <person name="Hernandez J.R."/>
            <person name="Houck J."/>
            <person name="Hostin D."/>
            <person name="Houston K.A."/>
            <person name="Howland T.J."/>
            <person name="Wei M.-H."/>
            <person name="Ibegwam C."/>
            <person name="Jalali M."/>
            <person name="Kalush F."/>
            <person name="Karpen G.H."/>
            <person name="Ke Z."/>
            <person name="Kennison J.A."/>
            <person name="Ketchum K.A."/>
            <person name="Kimmel B.E."/>
            <person name="Kodira C.D."/>
            <person name="Kraft C.L."/>
            <person name="Kravitz S."/>
            <person name="Kulp D."/>
            <person name="Lai Z."/>
            <person name="Lasko P."/>
            <person name="Lei Y."/>
            <person name="Levitsky A.A."/>
            <person name="Li J.H."/>
            <person name="Li Z."/>
            <person name="Liang Y."/>
            <person name="Lin X."/>
            <person name="Liu X."/>
            <person name="Mattei B."/>
            <person name="McIntosh T.C."/>
            <person name="McLeod M.P."/>
            <person name="McPherson D."/>
            <person name="Merkulov G."/>
            <person name="Milshina N.V."/>
            <person name="Mobarry C."/>
            <person name="Morris J."/>
            <person name="Moshrefi A."/>
            <person name="Mount S.M."/>
            <person name="Moy M."/>
            <person name="Murphy B."/>
            <person name="Murphy L."/>
            <person name="Muzny D.M."/>
            <person name="Nelson D.L."/>
            <person name="Nelson D.R."/>
            <person name="Nelson K.A."/>
            <person name="Nixon K."/>
            <person name="Nusskern D.R."/>
            <person name="Pacleb J.M."/>
            <person name="Palazzolo M."/>
            <person name="Pittman G.S."/>
            <person name="Pan S."/>
            <person name="Pollard J."/>
            <person name="Puri V."/>
            <person name="Reese M.G."/>
            <person name="Reinert K."/>
            <person name="Remington K."/>
            <person name="Saunders R.D.C."/>
            <person name="Scheeler F."/>
            <person name="Shen H."/>
            <person name="Shue B.C."/>
            <person name="Siden-Kiamos I."/>
            <person name="Simpson M."/>
            <person name="Skupski M.P."/>
            <person name="Smith T.J."/>
            <person name="Spier E."/>
            <person name="Spradling A.C."/>
            <person name="Stapleton M."/>
            <person name="Strong R."/>
            <person name="Sun E."/>
            <person name="Svirskas R."/>
            <person name="Tector C."/>
            <person name="Turner R."/>
            <person name="Venter E."/>
            <person name="Wang A.H."/>
            <person name="Wang X."/>
            <person name="Wang Z.-Y."/>
            <person name="Wassarman D.A."/>
            <person name="Weinstock G.M."/>
            <person name="Weissenbach J."/>
            <person name="Williams S.M."/>
            <person name="Woodage T."/>
            <person name="Worley K.C."/>
            <person name="Wu D."/>
            <person name="Yang S."/>
            <person name="Yao Q.A."/>
            <person name="Ye J."/>
            <person name="Yeh R.-F."/>
            <person name="Zaveri J.S."/>
            <person name="Zhan M."/>
            <person name="Zhang G."/>
            <person name="Zhao Q."/>
            <person name="Zheng L."/>
            <person name="Zheng X.H."/>
            <person name="Zhong F.N."/>
            <person name="Zhong W."/>
            <person name="Zhou X."/>
            <person name="Zhu S.C."/>
            <person name="Zhu X."/>
            <person name="Smith H.O."/>
            <person name="Gibbs R.A."/>
            <person name="Myers E.W."/>
            <person name="Rubin G.M."/>
            <person name="Venter J.C."/>
        </authorList>
    </citation>
    <scope>NUCLEOTIDE SEQUENCE [LARGE SCALE GENOMIC DNA]</scope>
    <source>
        <strain>Berkeley</strain>
    </source>
</reference>
<reference key="3">
    <citation type="journal article" date="2002" name="Genome Biol.">
        <title>Annotation of the Drosophila melanogaster euchromatic genome: a systematic review.</title>
        <authorList>
            <person name="Misra S."/>
            <person name="Crosby M.A."/>
            <person name="Mungall C.J."/>
            <person name="Matthews B.B."/>
            <person name="Campbell K.S."/>
            <person name="Hradecky P."/>
            <person name="Huang Y."/>
            <person name="Kaminker J.S."/>
            <person name="Millburn G.H."/>
            <person name="Prochnik S.E."/>
            <person name="Smith C.D."/>
            <person name="Tupy J.L."/>
            <person name="Whitfield E.J."/>
            <person name="Bayraktaroglu L."/>
            <person name="Berman B.P."/>
            <person name="Bettencourt B.R."/>
            <person name="Celniker S.E."/>
            <person name="de Grey A.D.N.J."/>
            <person name="Drysdale R.A."/>
            <person name="Harris N.L."/>
            <person name="Richter J."/>
            <person name="Russo S."/>
            <person name="Schroeder A.J."/>
            <person name="Shu S.Q."/>
            <person name="Stapleton M."/>
            <person name="Yamada C."/>
            <person name="Ashburner M."/>
            <person name="Gelbart W.M."/>
            <person name="Rubin G.M."/>
            <person name="Lewis S.E."/>
        </authorList>
    </citation>
    <scope>GENOME REANNOTATION</scope>
    <source>
        <strain>Berkeley</strain>
    </source>
</reference>
<reference key="4">
    <citation type="journal article" date="2000" name="Science">
        <title>From sequence to chromosome: the tip of the X chromosome of D. melanogaster.</title>
        <authorList>
            <person name="Benos P.V."/>
            <person name="Gatt M.K."/>
            <person name="Ashburner M."/>
            <person name="Murphy L."/>
            <person name="Harris D."/>
            <person name="Barrell B.G."/>
            <person name="Ferraz C."/>
            <person name="Vidal S."/>
            <person name="Brun C."/>
            <person name="Demailles J."/>
            <person name="Cadieu E."/>
            <person name="Dreano S."/>
            <person name="Gloux S."/>
            <person name="Lelaure V."/>
            <person name="Mottier S."/>
            <person name="Galibert F."/>
            <person name="Borkova D."/>
            <person name="Minana B."/>
            <person name="Kafatos F.C."/>
            <person name="Louis C."/>
            <person name="Siden-Kiamos I."/>
            <person name="Bolshakov S."/>
            <person name="Papagiannakis G."/>
            <person name="Spanos L."/>
            <person name="Cox S."/>
            <person name="Madueno E."/>
            <person name="de Pablos B."/>
            <person name="Modolell J."/>
            <person name="Peter A."/>
            <person name="Schoettler P."/>
            <person name="Werner M."/>
            <person name="Mourkioti F."/>
            <person name="Beinert N."/>
            <person name="Dowe G."/>
            <person name="Schaefer U."/>
            <person name="Jaeckle H."/>
            <person name="Bucheton A."/>
            <person name="Callister D.M."/>
            <person name="Campbell L.A."/>
            <person name="Darlamitsou A."/>
            <person name="Henderson N.S."/>
            <person name="McMillan P.J."/>
            <person name="Salles C."/>
            <person name="Tait E.A."/>
            <person name="Valenti P."/>
            <person name="Saunders R.D.C."/>
            <person name="Glover D.M."/>
        </authorList>
    </citation>
    <scope>NUCLEOTIDE SEQUENCE [LARGE SCALE GENOMIC DNA]</scope>
    <source>
        <strain>Oregon-R</strain>
    </source>
</reference>
<reference key="5">
    <citation type="journal article" date="2002" name="Genome Biol.">
        <title>A Drosophila full-length cDNA resource.</title>
        <authorList>
            <person name="Stapleton M."/>
            <person name="Carlson J.W."/>
            <person name="Brokstein P."/>
            <person name="Yu C."/>
            <person name="Champe M."/>
            <person name="George R.A."/>
            <person name="Guarin H."/>
            <person name="Kronmiller B."/>
            <person name="Pacleb J.M."/>
            <person name="Park S."/>
            <person name="Wan K.H."/>
            <person name="Rubin G.M."/>
            <person name="Celniker S.E."/>
        </authorList>
    </citation>
    <scope>NUCLEOTIDE SEQUENCE [LARGE SCALE MRNA]</scope>
    <source>
        <strain>Berkeley</strain>
        <tissue>Testis</tissue>
    </source>
</reference>
<proteinExistence type="evidence at transcript level"/>
<keyword id="KW-0311">Gluconate utilization</keyword>
<keyword id="KW-0521">NADP</keyword>
<keyword id="KW-0560">Oxidoreductase</keyword>
<keyword id="KW-0570">Pentose shunt</keyword>
<keyword id="KW-1185">Reference proteome</keyword>